<accession>Q8E767</accession>
<reference key="1">
    <citation type="journal article" date="2002" name="Mol. Microbiol.">
        <title>Genome sequence of Streptococcus agalactiae, a pathogen causing invasive neonatal disease.</title>
        <authorList>
            <person name="Glaser P."/>
            <person name="Rusniok C."/>
            <person name="Buchrieser C."/>
            <person name="Chevalier F."/>
            <person name="Frangeul L."/>
            <person name="Msadek T."/>
            <person name="Zouine M."/>
            <person name="Couve E."/>
            <person name="Lalioui L."/>
            <person name="Poyart C."/>
            <person name="Trieu-Cuot P."/>
            <person name="Kunst F."/>
        </authorList>
    </citation>
    <scope>NUCLEOTIDE SEQUENCE [LARGE SCALE GENOMIC DNA]</scope>
    <source>
        <strain>NEM316</strain>
    </source>
</reference>
<protein>
    <recommendedName>
        <fullName evidence="1">UPF0398 protein gbs0290</fullName>
    </recommendedName>
</protein>
<dbReference type="EMBL" id="AL766844">
    <property type="protein sequence ID" value="CAD45935.1"/>
    <property type="molecule type" value="Genomic_DNA"/>
</dbReference>
<dbReference type="RefSeq" id="WP_000843096.1">
    <property type="nucleotide sequence ID" value="NC_004368.1"/>
</dbReference>
<dbReference type="SMR" id="Q8E767"/>
<dbReference type="KEGG" id="san:gbs0290"/>
<dbReference type="eggNOG" id="COG4474">
    <property type="taxonomic scope" value="Bacteria"/>
</dbReference>
<dbReference type="HOGENOM" id="CLU_105319_0_0_9"/>
<dbReference type="Proteomes" id="UP000000823">
    <property type="component" value="Chromosome"/>
</dbReference>
<dbReference type="Gene3D" id="3.40.50.450">
    <property type="match status" value="1"/>
</dbReference>
<dbReference type="HAMAP" id="MF_01575">
    <property type="entry name" value="UPF0398"/>
    <property type="match status" value="1"/>
</dbReference>
<dbReference type="InterPro" id="IPR010697">
    <property type="entry name" value="YspA"/>
</dbReference>
<dbReference type="NCBIfam" id="NF010181">
    <property type="entry name" value="PRK13660.1"/>
    <property type="match status" value="1"/>
</dbReference>
<dbReference type="PANTHER" id="PTHR38440:SF1">
    <property type="entry name" value="UPF0398 PROTEIN SPR0331"/>
    <property type="match status" value="1"/>
</dbReference>
<dbReference type="PANTHER" id="PTHR38440">
    <property type="entry name" value="UPF0398 PROTEIN YPSA"/>
    <property type="match status" value="1"/>
</dbReference>
<dbReference type="Pfam" id="PF06908">
    <property type="entry name" value="YpsA"/>
    <property type="match status" value="1"/>
</dbReference>
<dbReference type="PIRSF" id="PIRSF021290">
    <property type="entry name" value="DUF1273"/>
    <property type="match status" value="1"/>
</dbReference>
<dbReference type="SUPFAM" id="SSF102405">
    <property type="entry name" value="MCP/YpsA-like"/>
    <property type="match status" value="1"/>
</dbReference>
<evidence type="ECO:0000255" key="1">
    <source>
        <dbReference type="HAMAP-Rule" id="MF_01575"/>
    </source>
</evidence>
<proteinExistence type="inferred from homology"/>
<organism>
    <name type="scientific">Streptococcus agalactiae serotype III (strain NEM316)</name>
    <dbReference type="NCBI Taxonomy" id="211110"/>
    <lineage>
        <taxon>Bacteria</taxon>
        <taxon>Bacillati</taxon>
        <taxon>Bacillota</taxon>
        <taxon>Bacilli</taxon>
        <taxon>Lactobacillales</taxon>
        <taxon>Streptococcaceae</taxon>
        <taxon>Streptococcus</taxon>
    </lineage>
</organism>
<comment type="similarity">
    <text evidence="1">Belongs to the UPF0398 family.</text>
</comment>
<feature type="chain" id="PRO_0000267182" description="UPF0398 protein gbs0290">
    <location>
        <begin position="1"/>
        <end position="172"/>
    </location>
</feature>
<sequence>MKSTILVTGYKNFELGIFQDKDPRITIIKKAIDKDFRRFLENGADWFIFMGNLGFEYWALEVALDLQKEYDFQIATIFTFENHGQNWNEANKAKLALFKQVDFVKYTFPSYENPGQFKQYNHFLINNTQGAYLFYDSENETNLKFLLEMMEKKEAYDISFLTFDRLNEIYEE</sequence>
<gene>
    <name type="ordered locus">gbs0290</name>
</gene>
<name>Y290_STRA3</name>